<evidence type="ECO:0000250" key="1"/>
<evidence type="ECO:0000255" key="2">
    <source>
        <dbReference type="PROSITE-ProRule" id="PRU00338"/>
    </source>
</evidence>
<evidence type="ECO:0000255" key="3">
    <source>
        <dbReference type="PROSITE-ProRule" id="PRU00454"/>
    </source>
</evidence>
<evidence type="ECO:0000256" key="4">
    <source>
        <dbReference type="SAM" id="MobiDB-lite"/>
    </source>
</evidence>
<name>MBD12_ARATH</name>
<proteinExistence type="inferred from homology"/>
<sequence length="155" mass="17889">MVQCTDCKKWRLIPSMQHYNIIKETQLQTPFVCGTTSGWTPNMSCNVPQDGTTCDTWPSIPPIPTGWSRSVHIRSESTKFADVYYFPPSGERLRSSAEVQSFLDNHPEYVREGVNRSQFSFQIPKPLDDNYVKKRTRPVKRRKSSKDNNCEKGKK</sequence>
<protein>
    <recommendedName>
        <fullName>Putative methyl-CpG-binding domain protein 12</fullName>
        <shortName>AtMBD12</shortName>
        <shortName>MBD12</shortName>
    </recommendedName>
    <alternativeName>
        <fullName>Methyl-CpG-binding protein MBD12</fullName>
    </alternativeName>
</protein>
<comment type="function">
    <text evidence="1">Probable transcriptional regulator.</text>
</comment>
<comment type="subcellular location">
    <subcellularLocation>
        <location evidence="1">Nucleus</location>
    </subcellularLocation>
</comment>
<comment type="domain">
    <text evidence="1">The methyl-CpG-binding domain (MBD) functions both in binding to methylated DNA and in protein interactions.</text>
</comment>
<dbReference type="EMBL" id="AB025636">
    <property type="protein sequence ID" value="BAB11482.1"/>
    <property type="molecule type" value="Genomic_DNA"/>
</dbReference>
<dbReference type="EMBL" id="AF058826">
    <property type="status" value="NOT_ANNOTATED_CDS"/>
    <property type="molecule type" value="Genomic_DNA"/>
</dbReference>
<dbReference type="EMBL" id="CP002688">
    <property type="protein sequence ID" value="AED93955.1"/>
    <property type="molecule type" value="Genomic_DNA"/>
</dbReference>
<dbReference type="RefSeq" id="NP_974851.1">
    <property type="nucleotide sequence ID" value="NM_203122.2"/>
</dbReference>
<dbReference type="SMR" id="Q9FZP6"/>
<dbReference type="FunCoup" id="Q9FZP6">
    <property type="interactions" value="50"/>
</dbReference>
<dbReference type="STRING" id="3702.Q9FZP6"/>
<dbReference type="PaxDb" id="3702-AT5G35338.2"/>
<dbReference type="EnsemblPlants" id="AT5G35338.2">
    <property type="protein sequence ID" value="AT5G35338.2"/>
    <property type="gene ID" value="AT5G35338"/>
</dbReference>
<dbReference type="GeneID" id="833492"/>
<dbReference type="Gramene" id="AT5G35338.2">
    <property type="protein sequence ID" value="AT5G35338.2"/>
    <property type="gene ID" value="AT5G35338"/>
</dbReference>
<dbReference type="KEGG" id="ath:AT5G35338"/>
<dbReference type="Araport" id="AT5G35338"/>
<dbReference type="TAIR" id="AT5G35338">
    <property type="gene designation" value="MBD12"/>
</dbReference>
<dbReference type="eggNOG" id="KOG4161">
    <property type="taxonomic scope" value="Eukaryota"/>
</dbReference>
<dbReference type="HOGENOM" id="CLU_109577_0_0_1"/>
<dbReference type="InParanoid" id="Q9FZP6"/>
<dbReference type="OMA" id="IPSMQHY"/>
<dbReference type="OrthoDB" id="1111077at2759"/>
<dbReference type="PhylomeDB" id="Q9FZP6"/>
<dbReference type="PRO" id="PR:Q9FZP6"/>
<dbReference type="Proteomes" id="UP000006548">
    <property type="component" value="Chromosome 5"/>
</dbReference>
<dbReference type="ExpressionAtlas" id="Q9FZP6">
    <property type="expression patterns" value="baseline"/>
</dbReference>
<dbReference type="GO" id="GO:0005634">
    <property type="term" value="C:nucleus"/>
    <property type="evidence" value="ECO:0000250"/>
    <property type="project" value="UniProtKB"/>
</dbReference>
<dbReference type="GO" id="GO:0008327">
    <property type="term" value="F:methyl-CpG binding"/>
    <property type="evidence" value="ECO:0000250"/>
    <property type="project" value="TAIR"/>
</dbReference>
<dbReference type="GO" id="GO:0008270">
    <property type="term" value="F:zinc ion binding"/>
    <property type="evidence" value="ECO:0007669"/>
    <property type="project" value="UniProtKB-KW"/>
</dbReference>
<dbReference type="CDD" id="cd01396">
    <property type="entry name" value="MeCP2_MBD"/>
    <property type="match status" value="1"/>
</dbReference>
<dbReference type="FunFam" id="3.30.890.10:FF:000012">
    <property type="entry name" value="Methyl-CpG-binding domain-containing protein 1"/>
    <property type="match status" value="1"/>
</dbReference>
<dbReference type="FunFam" id="3.30.40.100:FF:000008">
    <property type="entry name" value="Methyl-CpG-binding domain-containing protein 2"/>
    <property type="match status" value="1"/>
</dbReference>
<dbReference type="Gene3D" id="3.30.40.100">
    <property type="match status" value="1"/>
</dbReference>
<dbReference type="Gene3D" id="3.30.890.10">
    <property type="entry name" value="Methyl-cpg-binding Protein 2, Chain A"/>
    <property type="match status" value="1"/>
</dbReference>
<dbReference type="InterPro" id="IPR016177">
    <property type="entry name" value="DNA-bd_dom_sf"/>
</dbReference>
<dbReference type="InterPro" id="IPR001739">
    <property type="entry name" value="Methyl_CpG_DNA-bd"/>
</dbReference>
<dbReference type="InterPro" id="IPR011124">
    <property type="entry name" value="Znf_CW"/>
</dbReference>
<dbReference type="PANTHER" id="PTHR12396:SF0">
    <property type="entry name" value="METHYL-CPG BINDING DOMAIN PROTEIN-LIKE, ISOFORM C"/>
    <property type="match status" value="1"/>
</dbReference>
<dbReference type="PANTHER" id="PTHR12396">
    <property type="entry name" value="METHYL-CPG BINDING PROTEIN, MBD"/>
    <property type="match status" value="1"/>
</dbReference>
<dbReference type="Pfam" id="PF01429">
    <property type="entry name" value="MBD"/>
    <property type="match status" value="1"/>
</dbReference>
<dbReference type="Pfam" id="PF07496">
    <property type="entry name" value="zf-CW"/>
    <property type="match status" value="1"/>
</dbReference>
<dbReference type="SMART" id="SM00391">
    <property type="entry name" value="MBD"/>
    <property type="match status" value="1"/>
</dbReference>
<dbReference type="SUPFAM" id="SSF54171">
    <property type="entry name" value="DNA-binding domain"/>
    <property type="match status" value="1"/>
</dbReference>
<dbReference type="PROSITE" id="PS50982">
    <property type="entry name" value="MBD"/>
    <property type="match status" value="1"/>
</dbReference>
<dbReference type="PROSITE" id="PS51050">
    <property type="entry name" value="ZF_CW"/>
    <property type="match status" value="1"/>
</dbReference>
<organism>
    <name type="scientific">Arabidopsis thaliana</name>
    <name type="common">Mouse-ear cress</name>
    <dbReference type="NCBI Taxonomy" id="3702"/>
    <lineage>
        <taxon>Eukaryota</taxon>
        <taxon>Viridiplantae</taxon>
        <taxon>Streptophyta</taxon>
        <taxon>Embryophyta</taxon>
        <taxon>Tracheophyta</taxon>
        <taxon>Spermatophyta</taxon>
        <taxon>Magnoliopsida</taxon>
        <taxon>eudicotyledons</taxon>
        <taxon>Gunneridae</taxon>
        <taxon>Pentapetalae</taxon>
        <taxon>rosids</taxon>
        <taxon>malvids</taxon>
        <taxon>Brassicales</taxon>
        <taxon>Brassicaceae</taxon>
        <taxon>Camelineae</taxon>
        <taxon>Arabidopsis</taxon>
    </lineage>
</organism>
<feature type="chain" id="PRO_0000405288" description="Putative methyl-CpG-binding domain protein 12">
    <location>
        <begin position="1"/>
        <end position="155"/>
    </location>
</feature>
<feature type="domain" description="MBD" evidence="2">
    <location>
        <begin position="53"/>
        <end position="126"/>
    </location>
</feature>
<feature type="zinc finger region" description="CW-type" evidence="3">
    <location>
        <begin position="1"/>
        <end position="53"/>
    </location>
</feature>
<feature type="region of interest" description="Disordered" evidence="4">
    <location>
        <begin position="130"/>
        <end position="155"/>
    </location>
</feature>
<feature type="short sequence motif" description="MBD-associated domain (MAD)">
    <location>
        <begin position="3"/>
        <end position="45"/>
    </location>
</feature>
<feature type="short sequence motif" description="Nuclear localization signal" evidence="1">
    <location>
        <begin position="140"/>
        <end position="147"/>
    </location>
</feature>
<feature type="compositionally biased region" description="Basic residues" evidence="4">
    <location>
        <begin position="133"/>
        <end position="144"/>
    </location>
</feature>
<feature type="compositionally biased region" description="Basic and acidic residues" evidence="4">
    <location>
        <begin position="145"/>
        <end position="155"/>
    </location>
</feature>
<feature type="binding site" evidence="3">
    <location>
        <position position="4"/>
    </location>
    <ligand>
        <name>Zn(2+)</name>
        <dbReference type="ChEBI" id="CHEBI:29105"/>
    </ligand>
</feature>
<feature type="binding site" evidence="3">
    <location>
        <position position="7"/>
    </location>
    <ligand>
        <name>Zn(2+)</name>
        <dbReference type="ChEBI" id="CHEBI:29105"/>
    </ligand>
</feature>
<feature type="binding site" evidence="3">
    <location>
        <position position="33"/>
    </location>
    <ligand>
        <name>Zn(2+)</name>
        <dbReference type="ChEBI" id="CHEBI:29105"/>
    </ligand>
</feature>
<feature type="binding site" evidence="3">
    <location>
        <position position="45"/>
    </location>
    <ligand>
        <name>Zn(2+)</name>
        <dbReference type="ChEBI" id="CHEBI:29105"/>
    </ligand>
</feature>
<reference key="1">
    <citation type="submission" date="1999-04" db="EMBL/GenBank/DDBJ databases">
        <title>Structural analysis of Arabidopsis thaliana chromosome 5. XI.</title>
        <authorList>
            <person name="Kaneko T."/>
            <person name="Katoh T."/>
            <person name="Asamizu E."/>
            <person name="Sato S."/>
            <person name="Nakamura Y."/>
            <person name="Kotani H."/>
            <person name="Tabata S."/>
        </authorList>
    </citation>
    <scope>NUCLEOTIDE SEQUENCE [LARGE SCALE GENOMIC DNA]</scope>
    <source>
        <strain>cv. Columbia</strain>
    </source>
</reference>
<reference key="2">
    <citation type="journal article" date="2000" name="Nature">
        <title>Sequence and analysis of chromosome 5 of the plant Arabidopsis thaliana.</title>
        <authorList>
            <person name="Tabata S."/>
            <person name="Kaneko T."/>
            <person name="Nakamura Y."/>
            <person name="Kotani H."/>
            <person name="Kato T."/>
            <person name="Asamizu E."/>
            <person name="Miyajima N."/>
            <person name="Sasamoto S."/>
            <person name="Kimura T."/>
            <person name="Hosouchi T."/>
            <person name="Kawashima K."/>
            <person name="Kohara M."/>
            <person name="Matsumoto M."/>
            <person name="Matsuno A."/>
            <person name="Muraki A."/>
            <person name="Nakayama S."/>
            <person name="Nakazaki N."/>
            <person name="Naruo K."/>
            <person name="Okumura S."/>
            <person name="Shinpo S."/>
            <person name="Takeuchi C."/>
            <person name="Wada T."/>
            <person name="Watanabe A."/>
            <person name="Yamada M."/>
            <person name="Yasuda M."/>
            <person name="Sato S."/>
            <person name="de la Bastide M."/>
            <person name="Huang E."/>
            <person name="Spiegel L."/>
            <person name="Gnoj L."/>
            <person name="O'Shaughnessy A."/>
            <person name="Preston R."/>
            <person name="Habermann K."/>
            <person name="Murray J."/>
            <person name="Johnson D."/>
            <person name="Rohlfing T."/>
            <person name="Nelson J."/>
            <person name="Stoneking T."/>
            <person name="Pepin K."/>
            <person name="Spieth J."/>
            <person name="Sekhon M."/>
            <person name="Armstrong J."/>
            <person name="Becker M."/>
            <person name="Belter E."/>
            <person name="Cordum H."/>
            <person name="Cordes M."/>
            <person name="Courtney L."/>
            <person name="Courtney W."/>
            <person name="Dante M."/>
            <person name="Du H."/>
            <person name="Edwards J."/>
            <person name="Fryman J."/>
            <person name="Haakensen B."/>
            <person name="Lamar E."/>
            <person name="Latreille P."/>
            <person name="Leonard S."/>
            <person name="Meyer R."/>
            <person name="Mulvaney E."/>
            <person name="Ozersky P."/>
            <person name="Riley A."/>
            <person name="Strowmatt C."/>
            <person name="Wagner-McPherson C."/>
            <person name="Wollam A."/>
            <person name="Yoakum M."/>
            <person name="Bell M."/>
            <person name="Dedhia N."/>
            <person name="Parnell L."/>
            <person name="Shah R."/>
            <person name="Rodriguez M."/>
            <person name="Hoon See L."/>
            <person name="Vil D."/>
            <person name="Baker J."/>
            <person name="Kirchoff K."/>
            <person name="Toth K."/>
            <person name="King L."/>
            <person name="Bahret A."/>
            <person name="Miller B."/>
            <person name="Marra M.A."/>
            <person name="Martienssen R."/>
            <person name="McCombie W.R."/>
            <person name="Wilson R.K."/>
            <person name="Murphy G."/>
            <person name="Bancroft I."/>
            <person name="Volckaert G."/>
            <person name="Wambutt R."/>
            <person name="Duesterhoeft A."/>
            <person name="Stiekema W."/>
            <person name="Pohl T."/>
            <person name="Entian K.-D."/>
            <person name="Terryn N."/>
            <person name="Hartley N."/>
            <person name="Bent E."/>
            <person name="Johnson S."/>
            <person name="Langham S.-A."/>
            <person name="McCullagh B."/>
            <person name="Robben J."/>
            <person name="Grymonprez B."/>
            <person name="Zimmermann W."/>
            <person name="Ramsperger U."/>
            <person name="Wedler H."/>
            <person name="Balke K."/>
            <person name="Wedler E."/>
            <person name="Peters S."/>
            <person name="van Staveren M."/>
            <person name="Dirkse W."/>
            <person name="Mooijman P."/>
            <person name="Klein Lankhorst R."/>
            <person name="Weitzenegger T."/>
            <person name="Bothe G."/>
            <person name="Rose M."/>
            <person name="Hauf J."/>
            <person name="Berneiser S."/>
            <person name="Hempel S."/>
            <person name="Feldpausch M."/>
            <person name="Lamberth S."/>
            <person name="Villarroel R."/>
            <person name="Gielen J."/>
            <person name="Ardiles W."/>
            <person name="Bents O."/>
            <person name="Lemcke K."/>
            <person name="Kolesov G."/>
            <person name="Mayer K.F.X."/>
            <person name="Rudd S."/>
            <person name="Schoof H."/>
            <person name="Schueller C."/>
            <person name="Zaccaria P."/>
            <person name="Mewes H.-W."/>
            <person name="Bevan M."/>
            <person name="Fransz P.F."/>
        </authorList>
    </citation>
    <scope>NUCLEOTIDE SEQUENCE [LARGE SCALE GENOMIC DNA]</scope>
    <source>
        <strain>cv. Columbia</strain>
    </source>
</reference>
<reference key="3">
    <citation type="journal article" date="2017" name="Plant J.">
        <title>Araport11: a complete reannotation of the Arabidopsis thaliana reference genome.</title>
        <authorList>
            <person name="Cheng C.Y."/>
            <person name="Krishnakumar V."/>
            <person name="Chan A.P."/>
            <person name="Thibaud-Nissen F."/>
            <person name="Schobel S."/>
            <person name="Town C.D."/>
        </authorList>
    </citation>
    <scope>GENOME REANNOTATION</scope>
    <source>
        <strain>cv. Columbia</strain>
    </source>
</reference>
<reference key="4">
    <citation type="journal article" date="2003" name="Nucleic Acids Res.">
        <title>Ten members of the Arabidopsis gene family encoding methyl-CpG-binding domain proteins are transcriptionally active and at least one, AtMBD11, is crucial for normal development.</title>
        <authorList>
            <person name="Berg A."/>
            <person name="Meza T.J."/>
            <person name="Mahic M."/>
            <person name="Thorstensen T."/>
            <person name="Kristiansen K."/>
            <person name="Aalen R.B."/>
        </authorList>
    </citation>
    <scope>MAD MOTIF</scope>
    <scope>GENE FAMILY</scope>
    <scope>NOMENCLATURE</scope>
</reference>
<reference key="5">
    <citation type="journal article" date="2005" name="Plant Physiol.">
        <title>Evolutionary divergence of monocot and dicot methyl-CpG-binding domain proteins.</title>
        <authorList>
            <person name="Springer N.M."/>
            <person name="Kaeppler S.M."/>
        </authorList>
    </citation>
    <scope>GENE FAMILY</scope>
</reference>
<reference key="6">
    <citation type="journal article" date="2007" name="Trends Plant Sci.">
        <title>Methyl-CpG-binding domain proteins in plants: interpreters of DNA methylation.</title>
        <authorList>
            <person name="Zemach A."/>
            <person name="Grafi G."/>
        </authorList>
    </citation>
    <scope>REVIEW</scope>
</reference>
<gene>
    <name type="primary">MBD12</name>
    <name type="ordered locus">At5g35338</name>
    <name type="ORF">MVP2</name>
    <name type="ORF">T26D22</name>
</gene>
<keyword id="KW-0238">DNA-binding</keyword>
<keyword id="KW-0479">Metal-binding</keyword>
<keyword id="KW-0539">Nucleus</keyword>
<keyword id="KW-1185">Reference proteome</keyword>
<keyword id="KW-0804">Transcription</keyword>
<keyword id="KW-0805">Transcription regulation</keyword>
<keyword id="KW-0862">Zinc</keyword>
<keyword id="KW-0863">Zinc-finger</keyword>
<accession>Q9FZP6</accession>